<reference key="1">
    <citation type="journal article" date="1990" name="EMBO J.">
        <title>Gene structure of nuclear lamin LIII of Xenopus laevis; a model for the evolution of IF proteins from a lamin-like ancestor.</title>
        <authorList>
            <person name="Doering V."/>
            <person name="Stick R."/>
        </authorList>
    </citation>
    <scope>NUCLEOTIDE SEQUENCE [MRNA] (ISOFORMS 1 AND 2)</scope>
</reference>
<reference key="2">
    <citation type="journal article" date="1988" name="EMBO J.">
        <title>cDNA cloning of the developmentally regulated lamin LIII of Xenopus laevis.</title>
        <authorList>
            <person name="Stick R."/>
        </authorList>
    </citation>
    <scope>NUCLEOTIDE SEQUENCE [MRNA] (ISOFORM 1)</scope>
    <scope>DEVELOPMENTAL STAGE</scope>
    <source>
        <tissue>Ovary</tissue>
    </source>
</reference>
<reference key="3">
    <citation type="submission" date="2004-07" db="EMBL/GenBank/DDBJ databases">
        <authorList>
            <consortium name="NIH - Xenopus Gene Collection (XGC) project"/>
        </authorList>
    </citation>
    <scope>NUCLEOTIDE SEQUENCE [LARGE SCALE MRNA] (ISOFORM 1)</scope>
    <source>
        <tissue>Embryo</tissue>
    </source>
</reference>
<dbReference type="EMBL" id="X13169">
    <property type="protein sequence ID" value="CAA31567.1"/>
    <property type="molecule type" value="mRNA"/>
</dbReference>
<dbReference type="EMBL" id="BC078034">
    <property type="protein sequence ID" value="AAH78034.1"/>
    <property type="molecule type" value="mRNA"/>
</dbReference>
<dbReference type="PIR" id="S01301">
    <property type="entry name" value="S01301"/>
</dbReference>
<dbReference type="RefSeq" id="NP_001081545.1">
    <property type="nucleotide sequence ID" value="NM_001088076.1"/>
</dbReference>
<dbReference type="RefSeq" id="XP_018106284.1">
    <molecule id="P10999-2"/>
    <property type="nucleotide sequence ID" value="XM_018250795.2"/>
</dbReference>
<dbReference type="SMR" id="P10999"/>
<dbReference type="BioGRID" id="99247">
    <property type="interactions" value="2"/>
</dbReference>
<dbReference type="GeneID" id="397910"/>
<dbReference type="KEGG" id="xla:397910"/>
<dbReference type="AGR" id="Xenbase:XB-GENE-920628"/>
<dbReference type="CTD" id="397910"/>
<dbReference type="Xenbase" id="XB-GENE-920628">
    <property type="gene designation" value="lmnb3.L"/>
</dbReference>
<dbReference type="OMA" id="MRMENTQ"/>
<dbReference type="OrthoDB" id="102442at2759"/>
<dbReference type="Proteomes" id="UP000186698">
    <property type="component" value="Chromosome 3L"/>
</dbReference>
<dbReference type="Bgee" id="397910">
    <property type="expression patterns" value="Expressed in egg cell and 17 other cell types or tissues"/>
</dbReference>
<dbReference type="GO" id="GO:0005882">
    <property type="term" value="C:intermediate filament"/>
    <property type="evidence" value="ECO:0007669"/>
    <property type="project" value="UniProtKB-KW"/>
</dbReference>
<dbReference type="GO" id="GO:0005635">
    <property type="term" value="C:nuclear envelope"/>
    <property type="evidence" value="ECO:0000318"/>
    <property type="project" value="GO_Central"/>
</dbReference>
<dbReference type="GO" id="GO:0005652">
    <property type="term" value="C:nuclear lamina"/>
    <property type="evidence" value="ECO:0000318"/>
    <property type="project" value="GO_Central"/>
</dbReference>
<dbReference type="GO" id="GO:0016363">
    <property type="term" value="C:nuclear matrix"/>
    <property type="evidence" value="ECO:0007669"/>
    <property type="project" value="UniProtKB-SubCell"/>
</dbReference>
<dbReference type="GO" id="GO:0005654">
    <property type="term" value="C:nucleoplasm"/>
    <property type="evidence" value="ECO:0007669"/>
    <property type="project" value="UniProtKB-SubCell"/>
</dbReference>
<dbReference type="GO" id="GO:0005200">
    <property type="term" value="F:structural constituent of cytoskeleton"/>
    <property type="evidence" value="ECO:0000318"/>
    <property type="project" value="GO_Central"/>
</dbReference>
<dbReference type="GO" id="GO:0031507">
    <property type="term" value="P:heterochromatin formation"/>
    <property type="evidence" value="ECO:0000318"/>
    <property type="project" value="GO_Central"/>
</dbReference>
<dbReference type="GO" id="GO:0006998">
    <property type="term" value="P:nuclear envelope organization"/>
    <property type="evidence" value="ECO:0000318"/>
    <property type="project" value="GO_Central"/>
</dbReference>
<dbReference type="GO" id="GO:0007097">
    <property type="term" value="P:nuclear migration"/>
    <property type="evidence" value="ECO:0000318"/>
    <property type="project" value="GO_Central"/>
</dbReference>
<dbReference type="GO" id="GO:0051664">
    <property type="term" value="P:nuclear pore localization"/>
    <property type="evidence" value="ECO:0000318"/>
    <property type="project" value="GO_Central"/>
</dbReference>
<dbReference type="GO" id="GO:0090435">
    <property type="term" value="P:protein localization to nuclear envelope"/>
    <property type="evidence" value="ECO:0000318"/>
    <property type="project" value="GO_Central"/>
</dbReference>
<dbReference type="Gene3D" id="1.20.5.170">
    <property type="match status" value="1"/>
</dbReference>
<dbReference type="Gene3D" id="2.60.40.1260">
    <property type="entry name" value="Lamin Tail domain"/>
    <property type="match status" value="1"/>
</dbReference>
<dbReference type="Gene3D" id="1.20.5.1160">
    <property type="entry name" value="Vasodilator-stimulated phosphoprotein"/>
    <property type="match status" value="1"/>
</dbReference>
<dbReference type="InterPro" id="IPR018039">
    <property type="entry name" value="IF_conserved"/>
</dbReference>
<dbReference type="InterPro" id="IPR039008">
    <property type="entry name" value="IF_rod_dom"/>
</dbReference>
<dbReference type="InterPro" id="IPR001322">
    <property type="entry name" value="Lamin_tail_dom"/>
</dbReference>
<dbReference type="InterPro" id="IPR036415">
    <property type="entry name" value="Lamin_tail_dom_sf"/>
</dbReference>
<dbReference type="PANTHER" id="PTHR45721">
    <property type="entry name" value="LAMIN DM0-RELATED"/>
    <property type="match status" value="1"/>
</dbReference>
<dbReference type="PANTHER" id="PTHR45721:SF16">
    <property type="entry name" value="LAMIN-L(III)"/>
    <property type="match status" value="1"/>
</dbReference>
<dbReference type="Pfam" id="PF00038">
    <property type="entry name" value="Filament"/>
    <property type="match status" value="1"/>
</dbReference>
<dbReference type="Pfam" id="PF00932">
    <property type="entry name" value="LTD"/>
    <property type="match status" value="1"/>
</dbReference>
<dbReference type="SMART" id="SM01391">
    <property type="entry name" value="Filament"/>
    <property type="match status" value="1"/>
</dbReference>
<dbReference type="SUPFAM" id="SSF64593">
    <property type="entry name" value="Intermediate filament protein, coiled coil region"/>
    <property type="match status" value="2"/>
</dbReference>
<dbReference type="SUPFAM" id="SSF74853">
    <property type="entry name" value="Lamin A/C globular tail domain"/>
    <property type="match status" value="1"/>
</dbReference>
<dbReference type="PROSITE" id="PS00226">
    <property type="entry name" value="IF_ROD_1"/>
    <property type="match status" value="1"/>
</dbReference>
<dbReference type="PROSITE" id="PS51842">
    <property type="entry name" value="IF_ROD_2"/>
    <property type="match status" value="1"/>
</dbReference>
<dbReference type="PROSITE" id="PS51841">
    <property type="entry name" value="LTD"/>
    <property type="match status" value="1"/>
</dbReference>
<keyword id="KW-0025">Alternative splicing</keyword>
<keyword id="KW-0175">Coiled coil</keyword>
<keyword id="KW-0403">Intermediate filament</keyword>
<keyword id="KW-0449">Lipoprotein</keyword>
<keyword id="KW-0488">Methylation</keyword>
<keyword id="KW-0539">Nucleus</keyword>
<keyword id="KW-0597">Phosphoprotein</keyword>
<keyword id="KW-0636">Prenylation</keyword>
<keyword id="KW-1185">Reference proteome</keyword>
<feature type="chain" id="PRO_0000063825" description="Lamin-B3">
    <location>
        <begin position="1"/>
        <end position="580"/>
    </location>
</feature>
<feature type="propeptide" id="PRO_0000396784" description="Removed in mature form" evidence="3">
    <location>
        <begin position="581"/>
        <end position="583"/>
    </location>
</feature>
<feature type="domain" description="IF rod" evidence="6">
    <location>
        <begin position="30"/>
        <end position="386"/>
    </location>
</feature>
<feature type="domain" description="LTD" evidence="5">
    <location>
        <begin position="429"/>
        <end position="546"/>
    </location>
</feature>
<feature type="region of interest" description="Disordered" evidence="7">
    <location>
        <begin position="1"/>
        <end position="30"/>
    </location>
</feature>
<feature type="region of interest" description="Head">
    <location>
        <begin position="2"/>
        <end position="32"/>
    </location>
</feature>
<feature type="region of interest" description="Coil 1A">
    <location>
        <begin position="33"/>
        <end position="67"/>
    </location>
</feature>
<feature type="region of interest" description="Linker 1">
    <location>
        <begin position="68"/>
        <end position="79"/>
    </location>
</feature>
<feature type="region of interest" description="Coil 1B">
    <location>
        <begin position="80"/>
        <end position="215"/>
    </location>
</feature>
<feature type="region of interest" description="Linker 2">
    <location>
        <begin position="216"/>
        <end position="242"/>
    </location>
</feature>
<feature type="region of interest" description="Coil 2">
    <location>
        <begin position="243"/>
        <end position="384"/>
    </location>
</feature>
<feature type="region of interest" description="Disordered" evidence="7">
    <location>
        <begin position="383"/>
        <end position="431"/>
    </location>
</feature>
<feature type="region of interest" description="Tail">
    <location>
        <begin position="385"/>
        <end position="580"/>
    </location>
</feature>
<feature type="compositionally biased region" description="Polar residues" evidence="7">
    <location>
        <begin position="15"/>
        <end position="26"/>
    </location>
</feature>
<feature type="compositionally biased region" description="Polar residues" evidence="7">
    <location>
        <begin position="390"/>
        <end position="408"/>
    </location>
</feature>
<feature type="modified residue" description="Phosphoserine" evidence="2">
    <location>
        <position position="21"/>
    </location>
</feature>
<feature type="modified residue" description="Phosphoserine" evidence="1">
    <location>
        <position position="391"/>
    </location>
</feature>
<feature type="modified residue" description="Cysteine methyl ester" evidence="3">
    <location>
        <position position="580"/>
    </location>
</feature>
<feature type="lipid moiety-binding region" description="S-farnesyl cysteine" evidence="3">
    <location>
        <position position="580"/>
    </location>
</feature>
<feature type="splice variant" id="VSP_002473" description="In isoform 2." evidence="9">
    <original>SHQSVDPSCSIM</original>
    <variation>TKRRKKKCCSVS</variation>
    <location>
        <begin position="572"/>
        <end position="583"/>
    </location>
</feature>
<feature type="sequence conflict" description="In Ref. 2; CAA31567." evidence="11" ref="2">
    <original>Q</original>
    <variation>H</variation>
    <location>
        <position position="349"/>
    </location>
</feature>
<name>LMNB3_XENLA</name>
<protein>
    <recommendedName>
        <fullName>Lamin-B3</fullName>
    </recommendedName>
    <alternativeName>
        <fullName evidence="9 10">Lamin-L(III)</fullName>
    </alternativeName>
</protein>
<evidence type="ECO:0000250" key="1">
    <source>
        <dbReference type="UniProtKB" id="P02545"/>
    </source>
</evidence>
<evidence type="ECO:0000250" key="2">
    <source>
        <dbReference type="UniProtKB" id="P14732"/>
    </source>
</evidence>
<evidence type="ECO:0000250" key="3">
    <source>
        <dbReference type="UniProtKB" id="P20700"/>
    </source>
</evidence>
<evidence type="ECO:0000250" key="4">
    <source>
        <dbReference type="UniProtKB" id="P21910"/>
    </source>
</evidence>
<evidence type="ECO:0000255" key="5">
    <source>
        <dbReference type="PROSITE-ProRule" id="PRU01187"/>
    </source>
</evidence>
<evidence type="ECO:0000255" key="6">
    <source>
        <dbReference type="PROSITE-ProRule" id="PRU01188"/>
    </source>
</evidence>
<evidence type="ECO:0000256" key="7">
    <source>
        <dbReference type="SAM" id="MobiDB-lite"/>
    </source>
</evidence>
<evidence type="ECO:0000269" key="8">
    <source>
    </source>
</evidence>
<evidence type="ECO:0000303" key="9">
    <source>
    </source>
</evidence>
<evidence type="ECO:0000303" key="10">
    <source>
    </source>
</evidence>
<evidence type="ECO:0000305" key="11"/>
<organism>
    <name type="scientific">Xenopus laevis</name>
    <name type="common">African clawed frog</name>
    <dbReference type="NCBI Taxonomy" id="8355"/>
    <lineage>
        <taxon>Eukaryota</taxon>
        <taxon>Metazoa</taxon>
        <taxon>Chordata</taxon>
        <taxon>Craniata</taxon>
        <taxon>Vertebrata</taxon>
        <taxon>Euteleostomi</taxon>
        <taxon>Amphibia</taxon>
        <taxon>Batrachia</taxon>
        <taxon>Anura</taxon>
        <taxon>Pipoidea</taxon>
        <taxon>Pipidae</taxon>
        <taxon>Xenopodinae</taxon>
        <taxon>Xenopus</taxon>
        <taxon>Xenopus</taxon>
    </lineage>
</organism>
<proteinExistence type="evidence at transcript level"/>
<gene>
    <name type="primary">lmnb3.L</name>
</gene>
<comment type="function">
    <text evidence="1 4">Lamins are intermediate filament proteins that assemble into a filamentous meshwork, and which constitute the major components of the nuclear lamina, a fibrous layer on the nucleoplasmic side of the inner nuclear membrane (By similarity). Lamins provide a framework for the nuclear envelope, bridging the nuclear envelope and chromatin, thereby playing an important role in nuclear assembly, chromatin organization, nuclear membrane and telomere dynamics. The structural integrity of the lamina is strictly controlled by the cell cycle, as seen by the disintegration and formation of the nuclear envelope in prophase and telophase, respectively (By similarity).</text>
</comment>
<comment type="subcellular location">
    <subcellularLocation>
        <location evidence="4">Nucleus lamina</location>
    </subcellularLocation>
    <subcellularLocation>
        <location evidence="1">Nucleus envelope</location>
    </subcellularLocation>
    <subcellularLocation>
        <location evidence="1">Nucleus</location>
        <location evidence="1">Nucleoplasm</location>
    </subcellularLocation>
    <subcellularLocation>
        <location evidence="1">Nucleus matrix</location>
    </subcellularLocation>
</comment>
<comment type="alternative products">
    <event type="alternative splicing"/>
    <isoform>
        <id>P10999-1</id>
        <name>1</name>
        <name>B3A</name>
        <sequence type="displayed"/>
    </isoform>
    <isoform>
        <id>P10999-2</id>
        <name>2</name>
        <name>B3B</name>
        <sequence type="described" ref="VSP_002473"/>
    </isoform>
</comment>
<comment type="developmental stage">
    <text evidence="8">Expressed in oocytes.</text>
</comment>
<comment type="PTM">
    <text evidence="2">Phosphorylation plays a key role in lamin organization, subcellular localization and nuclear envelope disintegration. Phosphorylation by CDK1 at Ser-21 at the onset of mitosis drives lamin disassembly and nuclear envelope breakdown.</text>
</comment>
<comment type="miscellaneous">
    <text>There are at least five different lamins in Xenopus: the somatic lamins L(I)/lmnb1.S, L(II)/lmnb2.L, and A/lmna.L; the oocyte germinal vesicle lamin L(III)/lmnb3.L; and the male germ cells lamin l(IV).</text>
</comment>
<comment type="similarity">
    <text evidence="6">Belongs to the intermediate filament family.</text>
</comment>
<accession>P10999</accession>
<accession>P23420</accession>
<accession>Q6AZG7</accession>
<sequence>MATSTPSRAREHASAAQSPGSPTRISRMQEKEDLRHLNDRLAAYIERVRSLEADKSLLKIQLEEREEVSSREVTNLRQLYETELADARKLLDQTANERARLQVELGKVREEYRQLQARNSKKENDLSLAQNQLRDLESKLNTKEAELATALSGKRGLEEQLQEQRAQIAGLESSLRDTTKQLHDEMLWRVDLENKMQTIREQLDFQKNIHTQEVKEIKKRHDTRIVEIDSGRRVEFESKLAEALQELRRDHEQQILEYKEHLEKNFSAKLENAQLAAAKNSDYASATREEIMATKLRVDTLSSQLNHYQKQNSALEAKVRDLQDMLDRAHDMHRRQMTEKDREVTEIRQTLQGQLEEYEQLLDVKLALDMEINAYRKMLEGEEQRLKLSPSPSQRSTVSRASTSQTSRLLRGKKRKLDETGRSVTKRSYKVVQQASSTGPVSVEDIDPEGNYVRLLNNTEEDFSLHGWVVKRMHMSLPEIAFKLPCRFILKSSQRVTIWAAGAGAVHSPPTDLVWKSQKTWGTGDNIKITLLDSTGEECAERTLYRVIGEEGETDEDFVEEEELERQFRSQSHQSVDPSCSIM</sequence>